<feature type="chain" id="PRO_0000211194" description="Homeotic protein female sterile">
    <location>
        <begin position="1"/>
        <end position="2038"/>
    </location>
</feature>
<feature type="transmembrane region" description="Helical" evidence="1">
    <location>
        <begin position="330"/>
        <end position="350"/>
    </location>
</feature>
<feature type="transmembrane region" description="Helical" evidence="1">
    <location>
        <begin position="451"/>
        <end position="471"/>
    </location>
</feature>
<feature type="transmembrane region" description="Helical" evidence="1">
    <location>
        <begin position="750"/>
        <end position="770"/>
    </location>
</feature>
<feature type="transmembrane region" description="Helical" evidence="1">
    <location>
        <begin position="790"/>
        <end position="810"/>
    </location>
</feature>
<feature type="transmembrane region" description="Helical" evidence="1">
    <location>
        <begin position="816"/>
        <end position="830"/>
    </location>
</feature>
<feature type="transmembrane region" description="Helical" evidence="1">
    <location>
        <begin position="874"/>
        <end position="894"/>
    </location>
</feature>
<feature type="transmembrane region" description="Helical" evidence="1">
    <location>
        <begin position="1731"/>
        <end position="1751"/>
    </location>
</feature>
<feature type="transmembrane region" description="Helical" evidence="1">
    <location>
        <begin position="1939"/>
        <end position="1959"/>
    </location>
</feature>
<feature type="domain" description="Bromo 1" evidence="2">
    <location>
        <begin position="34"/>
        <end position="140"/>
    </location>
</feature>
<feature type="domain" description="Bromo 2" evidence="2">
    <location>
        <begin position="475"/>
        <end position="584"/>
    </location>
</feature>
<feature type="domain" description="NET" evidence="3">
    <location>
        <begin position="942"/>
        <end position="1024"/>
    </location>
</feature>
<feature type="region of interest" description="Disordered" evidence="4">
    <location>
        <begin position="145"/>
        <end position="284"/>
    </location>
</feature>
<feature type="region of interest" description="Disordered" evidence="4">
    <location>
        <begin position="396"/>
        <end position="432"/>
    </location>
</feature>
<feature type="region of interest" description="Disordered" evidence="4">
    <location>
        <begin position="590"/>
        <end position="655"/>
    </location>
</feature>
<feature type="region of interest" description="Disordered" evidence="4">
    <location>
        <begin position="677"/>
        <end position="735"/>
    </location>
</feature>
<feature type="region of interest" description="Disordered" evidence="4">
    <location>
        <begin position="832"/>
        <end position="858"/>
    </location>
</feature>
<feature type="region of interest" description="Disordered" evidence="4">
    <location>
        <begin position="891"/>
        <end position="956"/>
    </location>
</feature>
<feature type="region of interest" description="Disordered" evidence="4">
    <location>
        <begin position="1016"/>
        <end position="1139"/>
    </location>
</feature>
<feature type="region of interest" description="Disordered" evidence="4">
    <location>
        <begin position="1217"/>
        <end position="1260"/>
    </location>
</feature>
<feature type="region of interest" description="Disordered" evidence="4">
    <location>
        <begin position="1384"/>
        <end position="1416"/>
    </location>
</feature>
<feature type="region of interest" description="Disordered" evidence="4">
    <location>
        <begin position="1502"/>
        <end position="1530"/>
    </location>
</feature>
<feature type="region of interest" description="Disordered" evidence="4">
    <location>
        <begin position="1580"/>
        <end position="1616"/>
    </location>
</feature>
<feature type="region of interest" description="Disordered" evidence="4">
    <location>
        <begin position="1645"/>
        <end position="1728"/>
    </location>
</feature>
<feature type="region of interest" description="Disordered" evidence="4">
    <location>
        <begin position="1745"/>
        <end position="1918"/>
    </location>
</feature>
<feature type="region of interest" description="Disordered" evidence="4">
    <location>
        <begin position="1957"/>
        <end position="2023"/>
    </location>
</feature>
<feature type="compositionally biased region" description="Low complexity" evidence="4">
    <location>
        <begin position="177"/>
        <end position="209"/>
    </location>
</feature>
<feature type="compositionally biased region" description="Low complexity" evidence="4">
    <location>
        <begin position="268"/>
        <end position="279"/>
    </location>
</feature>
<feature type="compositionally biased region" description="Polar residues" evidence="4">
    <location>
        <begin position="404"/>
        <end position="421"/>
    </location>
</feature>
<feature type="compositionally biased region" description="Basic residues" evidence="4">
    <location>
        <begin position="593"/>
        <end position="619"/>
    </location>
</feature>
<feature type="compositionally biased region" description="Acidic residues" evidence="4">
    <location>
        <begin position="636"/>
        <end position="649"/>
    </location>
</feature>
<feature type="compositionally biased region" description="Basic residues" evidence="4">
    <location>
        <begin position="681"/>
        <end position="694"/>
    </location>
</feature>
<feature type="compositionally biased region" description="Gly residues" evidence="4">
    <location>
        <begin position="711"/>
        <end position="735"/>
    </location>
</feature>
<feature type="compositionally biased region" description="Gly residues" evidence="4">
    <location>
        <begin position="910"/>
        <end position="927"/>
    </location>
</feature>
<feature type="compositionally biased region" description="Basic residues" evidence="4">
    <location>
        <begin position="1017"/>
        <end position="1027"/>
    </location>
</feature>
<feature type="compositionally biased region" description="Basic and acidic residues" evidence="4">
    <location>
        <begin position="1028"/>
        <end position="1046"/>
    </location>
</feature>
<feature type="compositionally biased region" description="Low complexity" evidence="4">
    <location>
        <begin position="1079"/>
        <end position="1100"/>
    </location>
</feature>
<feature type="compositionally biased region" description="Polar residues" evidence="4">
    <location>
        <begin position="1121"/>
        <end position="1131"/>
    </location>
</feature>
<feature type="compositionally biased region" description="Polar residues" evidence="4">
    <location>
        <begin position="1222"/>
        <end position="1232"/>
    </location>
</feature>
<feature type="compositionally biased region" description="Low complexity" evidence="4">
    <location>
        <begin position="1645"/>
        <end position="1665"/>
    </location>
</feature>
<feature type="compositionally biased region" description="Basic and acidic residues" evidence="4">
    <location>
        <begin position="1680"/>
        <end position="1708"/>
    </location>
</feature>
<feature type="compositionally biased region" description="Low complexity" evidence="4">
    <location>
        <begin position="1716"/>
        <end position="1728"/>
    </location>
</feature>
<feature type="compositionally biased region" description="Low complexity" evidence="4">
    <location>
        <begin position="1745"/>
        <end position="1760"/>
    </location>
</feature>
<feature type="compositionally biased region" description="Basic and acidic residues" evidence="4">
    <location>
        <begin position="1776"/>
        <end position="1791"/>
    </location>
</feature>
<feature type="compositionally biased region" description="Low complexity" evidence="4">
    <location>
        <begin position="1800"/>
        <end position="1813"/>
    </location>
</feature>
<feature type="compositionally biased region" description="Gly residues" evidence="4">
    <location>
        <begin position="1814"/>
        <end position="1828"/>
    </location>
</feature>
<feature type="compositionally biased region" description="Gly residues" evidence="4">
    <location>
        <begin position="1835"/>
        <end position="1856"/>
    </location>
</feature>
<feature type="compositionally biased region" description="Low complexity" evidence="4">
    <location>
        <begin position="1857"/>
        <end position="1884"/>
    </location>
</feature>
<feature type="compositionally biased region" description="Gly residues" evidence="4">
    <location>
        <begin position="1885"/>
        <end position="1915"/>
    </location>
</feature>
<feature type="compositionally biased region" description="Low complexity" evidence="4">
    <location>
        <begin position="1986"/>
        <end position="1997"/>
    </location>
</feature>
<feature type="compositionally biased region" description="Basic and acidic residues" evidence="4">
    <location>
        <begin position="1998"/>
        <end position="2017"/>
    </location>
</feature>
<feature type="modified residue" description="Phosphoserine" evidence="5">
    <location>
        <position position="452"/>
    </location>
</feature>
<feature type="modified residue" description="Phosphoserine" evidence="5">
    <location>
        <position position="943"/>
    </location>
</feature>
<feature type="modified residue" description="Phosphoserine" evidence="5">
    <location>
        <position position="1653"/>
    </location>
</feature>
<feature type="modified residue" description="Phosphoserine" evidence="5">
    <location>
        <position position="1980"/>
    </location>
</feature>
<feature type="modified residue" description="Phosphoserine" evidence="5">
    <location>
        <position position="1988"/>
    </location>
</feature>
<feature type="splice variant" id="VSP_014148" description="In isoform A." evidence="7 8">
    <original>H</original>
    <variation>RKPYY</variation>
    <location>
        <position position="1022"/>
    </location>
</feature>
<feature type="splice variant" id="VSP_014149" description="In isoform A." evidence="7 8">
    <location>
        <begin position="1107"/>
        <end position="2038"/>
    </location>
</feature>
<feature type="sequence conflict" description="In Ref. 1; AAA28540." evidence="9" ref="1">
    <original>A</original>
    <variation>G</variation>
    <location>
        <position position="909"/>
    </location>
</feature>
<feature type="sequence conflict" description="In Ref. 1; AAA28540." evidence="9" ref="1">
    <original>Q</original>
    <variation>QQ</variation>
    <location>
        <position position="1403"/>
    </location>
</feature>
<feature type="sequence conflict" description="In Ref. 1; AAA28540." evidence="9" ref="1">
    <location>
        <position position="1532"/>
    </location>
</feature>
<name>FSH_DROME</name>
<reference key="1">
    <citation type="journal article" date="1989" name="Dev. Biol.">
        <title>The Drosophila fsh locus, a maternal effect homeotic gene, encodes apparent membrane proteins.</title>
        <authorList>
            <person name="Haynes S.R."/>
            <person name="Mozer B.A."/>
            <person name="Bhatia-Dey N."/>
            <person name="Dawid I.B."/>
        </authorList>
    </citation>
    <scope>NUCLEOTIDE SEQUENCE [GENOMIC DNA / MRNA] (ISOFORMS A AND B)</scope>
    <scope>FUNCTION</scope>
    <scope>DEVELOPMENTAL STAGE</scope>
</reference>
<reference key="2">
    <citation type="journal article" date="2000" name="Science">
        <title>The genome sequence of Drosophila melanogaster.</title>
        <authorList>
            <person name="Adams M.D."/>
            <person name="Celniker S.E."/>
            <person name="Holt R.A."/>
            <person name="Evans C.A."/>
            <person name="Gocayne J.D."/>
            <person name="Amanatides P.G."/>
            <person name="Scherer S.E."/>
            <person name="Li P.W."/>
            <person name="Hoskins R.A."/>
            <person name="Galle R.F."/>
            <person name="George R.A."/>
            <person name="Lewis S.E."/>
            <person name="Richards S."/>
            <person name="Ashburner M."/>
            <person name="Henderson S.N."/>
            <person name="Sutton G.G."/>
            <person name="Wortman J.R."/>
            <person name="Yandell M.D."/>
            <person name="Zhang Q."/>
            <person name="Chen L.X."/>
            <person name="Brandon R.C."/>
            <person name="Rogers Y.-H.C."/>
            <person name="Blazej R.G."/>
            <person name="Champe M."/>
            <person name="Pfeiffer B.D."/>
            <person name="Wan K.H."/>
            <person name="Doyle C."/>
            <person name="Baxter E.G."/>
            <person name="Helt G."/>
            <person name="Nelson C.R."/>
            <person name="Miklos G.L.G."/>
            <person name="Abril J.F."/>
            <person name="Agbayani A."/>
            <person name="An H.-J."/>
            <person name="Andrews-Pfannkoch C."/>
            <person name="Baldwin D."/>
            <person name="Ballew R.M."/>
            <person name="Basu A."/>
            <person name="Baxendale J."/>
            <person name="Bayraktaroglu L."/>
            <person name="Beasley E.M."/>
            <person name="Beeson K.Y."/>
            <person name="Benos P.V."/>
            <person name="Berman B.P."/>
            <person name="Bhandari D."/>
            <person name="Bolshakov S."/>
            <person name="Borkova D."/>
            <person name="Botchan M.R."/>
            <person name="Bouck J."/>
            <person name="Brokstein P."/>
            <person name="Brottier P."/>
            <person name="Burtis K.C."/>
            <person name="Busam D.A."/>
            <person name="Butler H."/>
            <person name="Cadieu E."/>
            <person name="Center A."/>
            <person name="Chandra I."/>
            <person name="Cherry J.M."/>
            <person name="Cawley S."/>
            <person name="Dahlke C."/>
            <person name="Davenport L.B."/>
            <person name="Davies P."/>
            <person name="de Pablos B."/>
            <person name="Delcher A."/>
            <person name="Deng Z."/>
            <person name="Mays A.D."/>
            <person name="Dew I."/>
            <person name="Dietz S.M."/>
            <person name="Dodson K."/>
            <person name="Doup L.E."/>
            <person name="Downes M."/>
            <person name="Dugan-Rocha S."/>
            <person name="Dunkov B.C."/>
            <person name="Dunn P."/>
            <person name="Durbin K.J."/>
            <person name="Evangelista C.C."/>
            <person name="Ferraz C."/>
            <person name="Ferriera S."/>
            <person name="Fleischmann W."/>
            <person name="Fosler C."/>
            <person name="Gabrielian A.E."/>
            <person name="Garg N.S."/>
            <person name="Gelbart W.M."/>
            <person name="Glasser K."/>
            <person name="Glodek A."/>
            <person name="Gong F."/>
            <person name="Gorrell J.H."/>
            <person name="Gu Z."/>
            <person name="Guan P."/>
            <person name="Harris M."/>
            <person name="Harris N.L."/>
            <person name="Harvey D.A."/>
            <person name="Heiman T.J."/>
            <person name="Hernandez J.R."/>
            <person name="Houck J."/>
            <person name="Hostin D."/>
            <person name="Houston K.A."/>
            <person name="Howland T.J."/>
            <person name="Wei M.-H."/>
            <person name="Ibegwam C."/>
            <person name="Jalali M."/>
            <person name="Kalush F."/>
            <person name="Karpen G.H."/>
            <person name="Ke Z."/>
            <person name="Kennison J.A."/>
            <person name="Ketchum K.A."/>
            <person name="Kimmel B.E."/>
            <person name="Kodira C.D."/>
            <person name="Kraft C.L."/>
            <person name="Kravitz S."/>
            <person name="Kulp D."/>
            <person name="Lai Z."/>
            <person name="Lasko P."/>
            <person name="Lei Y."/>
            <person name="Levitsky A.A."/>
            <person name="Li J.H."/>
            <person name="Li Z."/>
            <person name="Liang Y."/>
            <person name="Lin X."/>
            <person name="Liu X."/>
            <person name="Mattei B."/>
            <person name="McIntosh T.C."/>
            <person name="McLeod M.P."/>
            <person name="McPherson D."/>
            <person name="Merkulov G."/>
            <person name="Milshina N.V."/>
            <person name="Mobarry C."/>
            <person name="Morris J."/>
            <person name="Moshrefi A."/>
            <person name="Mount S.M."/>
            <person name="Moy M."/>
            <person name="Murphy B."/>
            <person name="Murphy L."/>
            <person name="Muzny D.M."/>
            <person name="Nelson D.L."/>
            <person name="Nelson D.R."/>
            <person name="Nelson K.A."/>
            <person name="Nixon K."/>
            <person name="Nusskern D.R."/>
            <person name="Pacleb J.M."/>
            <person name="Palazzolo M."/>
            <person name="Pittman G.S."/>
            <person name="Pan S."/>
            <person name="Pollard J."/>
            <person name="Puri V."/>
            <person name="Reese M.G."/>
            <person name="Reinert K."/>
            <person name="Remington K."/>
            <person name="Saunders R.D.C."/>
            <person name="Scheeler F."/>
            <person name="Shen H."/>
            <person name="Shue B.C."/>
            <person name="Siden-Kiamos I."/>
            <person name="Simpson M."/>
            <person name="Skupski M.P."/>
            <person name="Smith T.J."/>
            <person name="Spier E."/>
            <person name="Spradling A.C."/>
            <person name="Stapleton M."/>
            <person name="Strong R."/>
            <person name="Sun E."/>
            <person name="Svirskas R."/>
            <person name="Tector C."/>
            <person name="Turner R."/>
            <person name="Venter E."/>
            <person name="Wang A.H."/>
            <person name="Wang X."/>
            <person name="Wang Z.-Y."/>
            <person name="Wassarman D.A."/>
            <person name="Weinstock G.M."/>
            <person name="Weissenbach J."/>
            <person name="Williams S.M."/>
            <person name="Woodage T."/>
            <person name="Worley K.C."/>
            <person name="Wu D."/>
            <person name="Yang S."/>
            <person name="Yao Q.A."/>
            <person name="Ye J."/>
            <person name="Yeh R.-F."/>
            <person name="Zaveri J.S."/>
            <person name="Zhan M."/>
            <person name="Zhang G."/>
            <person name="Zhao Q."/>
            <person name="Zheng L."/>
            <person name="Zheng X.H."/>
            <person name="Zhong F.N."/>
            <person name="Zhong W."/>
            <person name="Zhou X."/>
            <person name="Zhu S.C."/>
            <person name="Zhu X."/>
            <person name="Smith H.O."/>
            <person name="Gibbs R.A."/>
            <person name="Myers E.W."/>
            <person name="Rubin G.M."/>
            <person name="Venter J.C."/>
        </authorList>
    </citation>
    <scope>NUCLEOTIDE SEQUENCE [LARGE SCALE GENOMIC DNA]</scope>
    <source>
        <strain>Berkeley</strain>
    </source>
</reference>
<reference key="3">
    <citation type="journal article" date="2002" name="Genome Biol.">
        <title>Annotation of the Drosophila melanogaster euchromatic genome: a systematic review.</title>
        <authorList>
            <person name="Misra S."/>
            <person name="Crosby M.A."/>
            <person name="Mungall C.J."/>
            <person name="Matthews B.B."/>
            <person name="Campbell K.S."/>
            <person name="Hradecky P."/>
            <person name="Huang Y."/>
            <person name="Kaminker J.S."/>
            <person name="Millburn G.H."/>
            <person name="Prochnik S.E."/>
            <person name="Smith C.D."/>
            <person name="Tupy J.L."/>
            <person name="Whitfield E.J."/>
            <person name="Bayraktaroglu L."/>
            <person name="Berman B.P."/>
            <person name="Bettencourt B.R."/>
            <person name="Celniker S.E."/>
            <person name="de Grey A.D.N.J."/>
            <person name="Drysdale R.A."/>
            <person name="Harris N.L."/>
            <person name="Richter J."/>
            <person name="Russo S."/>
            <person name="Schroeder A.J."/>
            <person name="Shu S.Q."/>
            <person name="Stapleton M."/>
            <person name="Yamada C."/>
            <person name="Ashburner M."/>
            <person name="Gelbart W.M."/>
            <person name="Rubin G.M."/>
            <person name="Lewis S.E."/>
        </authorList>
    </citation>
    <scope>GENOME REANNOTATION</scope>
    <scope>ALTERNATIVE SPLICING</scope>
    <source>
        <strain>Berkeley</strain>
    </source>
</reference>
<reference key="4">
    <citation type="submission" date="2004-08" db="EMBL/GenBank/DDBJ databases">
        <authorList>
            <person name="Stapleton M."/>
            <person name="Carlson J.W."/>
            <person name="Chavez C."/>
            <person name="Frise E."/>
            <person name="George R.A."/>
            <person name="Pacleb J.M."/>
            <person name="Park S."/>
            <person name="Wan K.H."/>
            <person name="Yu C."/>
            <person name="Rubin G.M."/>
            <person name="Celniker S.E."/>
        </authorList>
    </citation>
    <scope>NUCLEOTIDE SEQUENCE [LARGE SCALE MRNA] (ISOFORM A)</scope>
    <source>
        <strain>Berkeley</strain>
        <tissue>Embryo</tissue>
    </source>
</reference>
<reference key="5">
    <citation type="journal article" date="1987" name="Proc. Natl. Acad. Sci. U.S.A.">
        <title>Pen repeat sequences are GGN clusters and encode a glycine-rich domain in a Drosophila cDNA homologous to the rat helix destabilizing protein.</title>
        <authorList>
            <person name="Haynes S.R."/>
            <person name="Rebbert M.L."/>
            <person name="Mozer B.A."/>
            <person name="Forquignon F."/>
            <person name="Dawid I.B."/>
        </authorList>
    </citation>
    <scope>NUCLEOTIDE SEQUENCE [MRNA] OF 308-357 AND 848-897</scope>
    <scope>NUCLEOTIDE SEQUENCE [GENOMIC DNA] OF 1812-1861</scope>
    <source>
        <strain>Canton-S</strain>
        <tissue>Embryo</tissue>
    </source>
</reference>
<reference key="6">
    <citation type="journal article" date="2008" name="J. Proteome Res.">
        <title>Phosphoproteome analysis of Drosophila melanogaster embryos.</title>
        <authorList>
            <person name="Zhai B."/>
            <person name="Villen J."/>
            <person name="Beausoleil S.A."/>
            <person name="Mintseris J."/>
            <person name="Gygi S.P."/>
        </authorList>
    </citation>
    <scope>PHOSPHORYLATION [LARGE SCALE ANALYSIS] AT SER-452; SER-943; SER-1653; SER-1980 AND SER-1988</scope>
    <scope>IDENTIFICATION BY MASS SPECTROMETRY</scope>
    <source>
        <tissue>Embryo</tissue>
    </source>
</reference>
<proteinExistence type="evidence at protein level"/>
<organism>
    <name type="scientific">Drosophila melanogaster</name>
    <name type="common">Fruit fly</name>
    <dbReference type="NCBI Taxonomy" id="7227"/>
    <lineage>
        <taxon>Eukaryota</taxon>
        <taxon>Metazoa</taxon>
        <taxon>Ecdysozoa</taxon>
        <taxon>Arthropoda</taxon>
        <taxon>Hexapoda</taxon>
        <taxon>Insecta</taxon>
        <taxon>Pterygota</taxon>
        <taxon>Neoptera</taxon>
        <taxon>Endopterygota</taxon>
        <taxon>Diptera</taxon>
        <taxon>Brachycera</taxon>
        <taxon>Muscomorpha</taxon>
        <taxon>Ephydroidea</taxon>
        <taxon>Drosophilidae</taxon>
        <taxon>Drosophila</taxon>
        <taxon>Sophophora</taxon>
    </lineage>
</organism>
<evidence type="ECO:0000255" key="1"/>
<evidence type="ECO:0000255" key="2">
    <source>
        <dbReference type="PROSITE-ProRule" id="PRU00035"/>
    </source>
</evidence>
<evidence type="ECO:0000255" key="3">
    <source>
        <dbReference type="PROSITE-ProRule" id="PRU00857"/>
    </source>
</evidence>
<evidence type="ECO:0000256" key="4">
    <source>
        <dbReference type="SAM" id="MobiDB-lite"/>
    </source>
</evidence>
<evidence type="ECO:0000269" key="5">
    <source>
    </source>
</evidence>
<evidence type="ECO:0000269" key="6">
    <source>
    </source>
</evidence>
<evidence type="ECO:0000303" key="7">
    <source>
    </source>
</evidence>
<evidence type="ECO:0000303" key="8">
    <source ref="4"/>
</evidence>
<evidence type="ECO:0000305" key="9"/>
<accession>P13709</accession>
<accession>A4V442</accession>
<accession>P13710</accession>
<accession>Q8IRN6</accession>
<accession>Q9W3L3</accession>
<sequence>MSSSEPPPRYEPPVEPVNGIVQPPVIPPAERPGRNTNQLQYLIKTVMKVIWKHHFSWPFQQPVDAKKLNLPDYHKIIKQPMDMGTIKKRLENNYYWSAKETIQDFNTMFNNCYVYNKPGEDVVVMAQTLEKVFLQKIESMPKEELELEPVTAKGGKKKQRAPATPKSSSGGAGASTGSGTSSAAVTSGPGSGSTKVSVAASSAQQSGLQGATGAGGGSSSTPGTQPGSGAGGAIAARPVSAMGGTVSSTAGGAPSIPPISTMPPHTVPGSTNTTTTAMAGGVGGPGAAGANPNAAALMASLLNAGQTGAYPGAPGQTAVNSSSLLDGSTAAVAAAAAAAAAAAAAAGGAAGAAGGAGTIPAVAVNAANAVQAYVNAGVSVGVDAVIPPQQPAKIKKGVKRKADTTTPTANAFESPYTQMDSKSAKIATRRESNRQDLTFQGSGYNMSPLGVSGVPGLGGLVAGGVAGVAVAKNKEKLSDALKSCNEILKELFSKKHSGYAWPFYKPVDAEMLGLHDYHDIIKKPMDLGTVKRKMDNREYKSAPEFAADVRLIFTNCYKYNPPDHDVVAMGRKLQDVFEMRYANIPDEPVANAAHHHGHGHGHGHGHGHGHGHGHGHGHGHGYGGSSSLKHDASDSSSEDSSDTENESNSDEERSARLKMLESKLLGLQEEIRKLSEEASAKKKAKKKLKEKKKSIGGGSGSGSASHHCHATGGGANAGGAGGPGSGGHGSVSVPGGVGSLGPGGAGGANLNALLGGSLVGHGGAAVAGGVPNVGALHSQVHDVAMAFSQMAGGGAAAGAGFGAGVTAAGASSGGKAGTLAGALAAGAAAGAGGTTAGSGSSKGAKSKGGRGAKGSGAGGVGASNNAAAGNAAGGAAGAAAGAGSVGGVGGAGAAGGGNASKRAKGSSSAGAGGGVGGANASAGGAGARGSSKKKPSQVMNFDSEEEDTAKPMSYDEKRQLSLDINKLPGDKLGRVVHIIQNREPSLRDSNPDEIEIDFETLKPSTLRELESYVASCLRKKTHKKPSGKSKDEQMAEKKQELEKRLQDVTGQLGASKKTAKKDESASSKVEAVQPANPVSSSSSSSDSSSSSSSDSSSSDSSDSEAGDGDERPPRKKKSRDSNGSNVNNPSINVVMGGNLPSGALSPTTMLMGLDHVVNSNTPTSQMSNMLGNANPLTAAAMLNNNNKTSLPGSNFGGAPAPGNMMHAGAGVPVAGAAVSASTGQQHNKNGPNDLSKVQPGGPINAALPPHSFAGGTATVATSQSSGGIRIASNLHKPSGLGGGDLGEHHAALAAALTSGINSTGTAGGGINNNGGSNNNANPLGGSHGDAMVNASLASLASGLKQIPQFDDPVEQSLASLEFSAGSTGKSGLTDNFLMQQHLMQPAGPQQQQQQQQQQPFGHQQQQQQQQQQQQQQQQHMDYVTELLSKGAENVGGMNGNHLLNFNLDMAAAYQQKHPQQQQQQAHNNGFNVADFGMAGFDGLNMTAASFLDLEPSLQQQQMQQMQLQQQHHQQQQQQTHQQQQQHQQQHHQQQQQQQLTQQQLQQQQQQQQQQQHLQQQQHQQQHHQAANKLLIIPKPIESMMPSPPDKQQLQQHQKVLPPQQSPSDMKLHPNAAAAAAVASAQAKLVQTFKANEQNLKNASSWSSLASANSPQSHTSSSSSSSKAKPAMDSFQQFRNKAKERDRLKLLEAAEKEKKNQKEAAEKEQQRKHHKSSSSSLTSAAVAQAAAIAAATAAAAVTLGAAAAAALASSASNPSGGSSSGGAGSTSQQAITGDRDRDRDRERERERSGSGGGQSGNGNNSSNSANSNGPGSAGSGGSGGGGGSGPASAGGPNSGGGGTANSNSGGGGGGGGPALLNAGSNSNSGVGSGGAASSNSNSSVGGIVGSGGPGSNSQGSSGGGGGGPASGGGMGSGAIDYGQQVAVLTQVAANAQAQHVAAAVAAQAILAASPLGAMESGRKSVHDAQPQISRVEDIKASPGGQGQSSPAQQSPQDRAAAKRAEQRRAEQERRRREALAGQIDMNMQSDLMAAFEETL</sequence>
<gene>
    <name type="primary">fs(1)h</name>
    <name type="synonym">fsh</name>
    <name type="ORF">CG2252</name>
</gene>
<comment type="function">
    <text evidence="6">Required maternally for proper expression of other homeotic genes involved in pattern formation, such as Ubx.</text>
</comment>
<comment type="subcellular location">
    <subcellularLocation>
        <location evidence="9">Membrane</location>
        <topology evidence="9">Multi-pass membrane protein</topology>
    </subcellularLocation>
</comment>
<comment type="alternative products">
    <event type="alternative splicing"/>
    <isoform>
        <id>P13709-1</id>
        <name>B</name>
        <sequence type="displayed"/>
    </isoform>
    <isoform>
        <id>P13709-2</id>
        <name>A</name>
        <name>C</name>
        <name>D</name>
        <name>E</name>
        <sequence type="described" ref="VSP_014148 VSP_014149"/>
    </isoform>
</comment>
<comment type="developmental stage">
    <text evidence="6">Expressed both maternally and zygotically.</text>
</comment>
<keyword id="KW-0025">Alternative splicing</keyword>
<keyword id="KW-0103">Bromodomain</keyword>
<keyword id="KW-0217">Developmental protein</keyword>
<keyword id="KW-0472">Membrane</keyword>
<keyword id="KW-0597">Phosphoprotein</keyword>
<keyword id="KW-1185">Reference proteome</keyword>
<keyword id="KW-0677">Repeat</keyword>
<keyword id="KW-0812">Transmembrane</keyword>
<keyword id="KW-1133">Transmembrane helix</keyword>
<dbReference type="EMBL" id="M23221">
    <property type="protein sequence ID" value="AAA28540.1"/>
    <property type="molecule type" value="mRNA"/>
</dbReference>
<dbReference type="EMBL" id="M23222">
    <property type="protein sequence ID" value="AAA28541.1"/>
    <property type="molecule type" value="mRNA"/>
</dbReference>
<dbReference type="EMBL" id="AE014298">
    <property type="protein sequence ID" value="AAF46312.3"/>
    <property type="molecule type" value="Genomic_DNA"/>
</dbReference>
<dbReference type="EMBL" id="AE014298">
    <property type="protein sequence ID" value="AAN09226.1"/>
    <property type="molecule type" value="Genomic_DNA"/>
</dbReference>
<dbReference type="EMBL" id="AE014298">
    <property type="protein sequence ID" value="AAS65277.1"/>
    <property type="molecule type" value="Genomic_DNA"/>
</dbReference>
<dbReference type="EMBL" id="AE014298">
    <property type="protein sequence ID" value="AAS65278.1"/>
    <property type="molecule type" value="Genomic_DNA"/>
</dbReference>
<dbReference type="EMBL" id="AE014298">
    <property type="protein sequence ID" value="AAS65279.1"/>
    <property type="molecule type" value="Genomic_DNA"/>
</dbReference>
<dbReference type="EMBL" id="BT015270">
    <property type="protein sequence ID" value="AAT94499.1"/>
    <property type="molecule type" value="mRNA"/>
</dbReference>
<dbReference type="EMBL" id="M15762">
    <property type="protein sequence ID" value="AAA70424.1"/>
    <property type="molecule type" value="Genomic_DNA"/>
</dbReference>
<dbReference type="EMBL" id="M15763">
    <property type="protein sequence ID" value="AAA70423.1"/>
    <property type="molecule type" value="mRNA"/>
</dbReference>
<dbReference type="EMBL" id="M15764">
    <property type="protein sequence ID" value="AAA70422.1"/>
    <property type="molecule type" value="mRNA"/>
</dbReference>
<dbReference type="PIR" id="A43742">
    <property type="entry name" value="A43742"/>
</dbReference>
<dbReference type="RefSeq" id="NP_001162699.1">
    <molecule id="P13709-2"/>
    <property type="nucleotide sequence ID" value="NM_001169228.2"/>
</dbReference>
<dbReference type="RefSeq" id="NP_511078.2">
    <molecule id="P13709-1"/>
    <property type="nucleotide sequence ID" value="NM_078523.3"/>
</dbReference>
<dbReference type="RefSeq" id="NP_727228.1">
    <molecule id="P13709-2"/>
    <property type="nucleotide sequence ID" value="NM_167144.4"/>
</dbReference>
<dbReference type="RefSeq" id="NP_996368.1">
    <molecule id="P13709-2"/>
    <property type="nucleotide sequence ID" value="NM_206645.4"/>
</dbReference>
<dbReference type="RefSeq" id="NP_996369.1">
    <molecule id="P13709-2"/>
    <property type="nucleotide sequence ID" value="NM_206646.4"/>
</dbReference>
<dbReference type="RefSeq" id="NP_996370.1">
    <molecule id="P13709-2"/>
    <property type="nucleotide sequence ID" value="NM_206647.3"/>
</dbReference>
<dbReference type="SMR" id="P13709"/>
<dbReference type="BioGRID" id="58193">
    <property type="interactions" value="27"/>
</dbReference>
<dbReference type="DIP" id="DIP-19376N"/>
<dbReference type="FunCoup" id="P13709">
    <property type="interactions" value="1620"/>
</dbReference>
<dbReference type="IntAct" id="P13709">
    <property type="interactions" value="33"/>
</dbReference>
<dbReference type="STRING" id="7227.FBpp0305499"/>
<dbReference type="GlyGen" id="P13709">
    <property type="glycosylation" value="2 sites, 1 O-linked glycan (1 site)"/>
</dbReference>
<dbReference type="iPTMnet" id="P13709"/>
<dbReference type="PaxDb" id="7227-FBpp0305499"/>
<dbReference type="DNASU" id="31722"/>
<dbReference type="EnsemblMetazoa" id="FBtr0071118">
    <molecule id="P13709-2"/>
    <property type="protein sequence ID" value="FBpp0071073"/>
    <property type="gene ID" value="FBgn0004656"/>
</dbReference>
<dbReference type="EnsemblMetazoa" id="FBtr0071119">
    <molecule id="P13709-1"/>
    <property type="protein sequence ID" value="FBpp0071074"/>
    <property type="gene ID" value="FBgn0004656"/>
</dbReference>
<dbReference type="EnsemblMetazoa" id="FBtr0071120">
    <molecule id="P13709-2"/>
    <property type="protein sequence ID" value="FBpp0089297"/>
    <property type="gene ID" value="FBgn0004656"/>
</dbReference>
<dbReference type="EnsemblMetazoa" id="FBtr0071121">
    <molecule id="P13709-2"/>
    <property type="protein sequence ID" value="FBpp0089298"/>
    <property type="gene ID" value="FBgn0004656"/>
</dbReference>
<dbReference type="EnsemblMetazoa" id="FBtr0071122">
    <molecule id="P13709-2"/>
    <property type="protein sequence ID" value="FBpp0089299"/>
    <property type="gene ID" value="FBgn0004656"/>
</dbReference>
<dbReference type="EnsemblMetazoa" id="FBtr0301309">
    <molecule id="P13709-2"/>
    <property type="protein sequence ID" value="FBpp0290524"/>
    <property type="gene ID" value="FBgn0004656"/>
</dbReference>
<dbReference type="GeneID" id="31722"/>
<dbReference type="KEGG" id="dme:Dmel_CG2252"/>
<dbReference type="UCSC" id="CG2252-RC">
    <property type="organism name" value="d. melanogaster"/>
</dbReference>
<dbReference type="AGR" id="FB:FBgn0004656"/>
<dbReference type="CTD" id="31722"/>
<dbReference type="FlyBase" id="FBgn0004656">
    <property type="gene designation" value="fs(1)h"/>
</dbReference>
<dbReference type="VEuPathDB" id="VectorBase:FBgn0004656"/>
<dbReference type="eggNOG" id="KOG1474">
    <property type="taxonomic scope" value="Eukaryota"/>
</dbReference>
<dbReference type="HOGENOM" id="CLU_001499_3_0_1"/>
<dbReference type="InParanoid" id="P13709"/>
<dbReference type="OrthoDB" id="21449at2759"/>
<dbReference type="PhylomeDB" id="P13709"/>
<dbReference type="Reactome" id="R-DME-8951936">
    <property type="pathway name" value="RUNX3 regulates p14-ARF"/>
</dbReference>
<dbReference type="SignaLink" id="P13709"/>
<dbReference type="BioGRID-ORCS" id="31722">
    <property type="hits" value="1 hit in 3 CRISPR screens"/>
</dbReference>
<dbReference type="ChiTaRS" id="fs(1)h">
    <property type="organism name" value="fly"/>
</dbReference>
<dbReference type="GenomeRNAi" id="31722"/>
<dbReference type="PRO" id="PR:P13709"/>
<dbReference type="Proteomes" id="UP000000803">
    <property type="component" value="Chromosome X"/>
</dbReference>
<dbReference type="Bgee" id="FBgn0004656">
    <property type="expression patterns" value="Expressed in polar follicle cell (Drosophila) in post-embryonic organism and 287 other cell types or tissues"/>
</dbReference>
<dbReference type="ExpressionAtlas" id="P13709">
    <property type="expression patterns" value="baseline and differential"/>
</dbReference>
<dbReference type="GO" id="GO:0000785">
    <property type="term" value="C:chromatin"/>
    <property type="evidence" value="ECO:0000318"/>
    <property type="project" value="GO_Central"/>
</dbReference>
<dbReference type="GO" id="GO:0016020">
    <property type="term" value="C:membrane"/>
    <property type="evidence" value="ECO:0007669"/>
    <property type="project" value="UniProtKB-SubCell"/>
</dbReference>
<dbReference type="GO" id="GO:0005634">
    <property type="term" value="C:nucleus"/>
    <property type="evidence" value="ECO:0000314"/>
    <property type="project" value="FlyBase"/>
</dbReference>
<dbReference type="GO" id="GO:0003682">
    <property type="term" value="F:chromatin binding"/>
    <property type="evidence" value="ECO:0000314"/>
    <property type="project" value="FlyBase"/>
</dbReference>
<dbReference type="GO" id="GO:0001216">
    <property type="term" value="F:DNA-binding transcription activator activity"/>
    <property type="evidence" value="ECO:0000314"/>
    <property type="project" value="FlyBase"/>
</dbReference>
<dbReference type="GO" id="GO:0042393">
    <property type="term" value="F:histone binding"/>
    <property type="evidence" value="ECO:0000318"/>
    <property type="project" value="GO_Central"/>
</dbReference>
<dbReference type="GO" id="GO:0140012">
    <property type="term" value="F:histone H4K5ac reader activity"/>
    <property type="evidence" value="ECO:0000250"/>
    <property type="project" value="FlyBase"/>
</dbReference>
<dbReference type="GO" id="GO:0106140">
    <property type="term" value="F:P-TEFb complex binding"/>
    <property type="evidence" value="ECO:0000314"/>
    <property type="project" value="FlyBase"/>
</dbReference>
<dbReference type="GO" id="GO:0004674">
    <property type="term" value="F:protein serine/threonine kinase activity"/>
    <property type="evidence" value="ECO:0000314"/>
    <property type="project" value="FlyBase"/>
</dbReference>
<dbReference type="GO" id="GO:0000977">
    <property type="term" value="F:RNA polymerase II transcription regulatory region sequence-specific DNA binding"/>
    <property type="evidence" value="ECO:0000314"/>
    <property type="project" value="FlyBase"/>
</dbReference>
<dbReference type="GO" id="GO:0006338">
    <property type="term" value="P:chromatin remodeling"/>
    <property type="evidence" value="ECO:0000318"/>
    <property type="project" value="GO_Central"/>
</dbReference>
<dbReference type="GO" id="GO:0048813">
    <property type="term" value="P:dendrite morphogenesis"/>
    <property type="evidence" value="ECO:0000315"/>
    <property type="project" value="FlyBase"/>
</dbReference>
<dbReference type="GO" id="GO:0045892">
    <property type="term" value="P:negative regulation of DNA-templated transcription"/>
    <property type="evidence" value="ECO:0000315"/>
    <property type="project" value="FlyBase"/>
</dbReference>
<dbReference type="GO" id="GO:0045944">
    <property type="term" value="P:positive regulation of transcription by RNA polymerase II"/>
    <property type="evidence" value="ECO:0000314"/>
    <property type="project" value="FlyBase"/>
</dbReference>
<dbReference type="GO" id="GO:0032968">
    <property type="term" value="P:positive regulation of transcription elongation by RNA polymerase II"/>
    <property type="evidence" value="ECO:0000315"/>
    <property type="project" value="FlyBase"/>
</dbReference>
<dbReference type="GO" id="GO:0006357">
    <property type="term" value="P:regulation of transcription by RNA polymerase II"/>
    <property type="evidence" value="ECO:0000318"/>
    <property type="project" value="GO_Central"/>
</dbReference>
<dbReference type="GO" id="GO:0007362">
    <property type="term" value="P:terminal region determination"/>
    <property type="evidence" value="ECO:0000315"/>
    <property type="project" value="FlyBase"/>
</dbReference>
<dbReference type="CDD" id="cd05497">
    <property type="entry name" value="Bromo_Brdt_I_like"/>
    <property type="match status" value="1"/>
</dbReference>
<dbReference type="CDD" id="cd05498">
    <property type="entry name" value="Bromo_Brdt_II_like"/>
    <property type="match status" value="1"/>
</dbReference>
<dbReference type="FunFam" id="1.20.920.10:FF:000003">
    <property type="entry name" value="Bromodomain-containing protein 2"/>
    <property type="match status" value="1"/>
</dbReference>
<dbReference type="FunFam" id="1.20.1270.220:FF:000001">
    <property type="entry name" value="bromodomain-containing protein 2 isoform X1"/>
    <property type="match status" value="1"/>
</dbReference>
<dbReference type="FunFam" id="1.20.920.10:FF:000002">
    <property type="entry name" value="Bromodomain-containing protein 4"/>
    <property type="match status" value="1"/>
</dbReference>
<dbReference type="Gene3D" id="1.20.1270.220">
    <property type="match status" value="1"/>
</dbReference>
<dbReference type="Gene3D" id="1.20.920.10">
    <property type="entry name" value="Bromodomain-like"/>
    <property type="match status" value="2"/>
</dbReference>
<dbReference type="InterPro" id="IPR031354">
    <property type="entry name" value="BRD4_CDT"/>
</dbReference>
<dbReference type="InterPro" id="IPR043508">
    <property type="entry name" value="Bromo_Brdt_I"/>
</dbReference>
<dbReference type="InterPro" id="IPR043509">
    <property type="entry name" value="Bromo_Brdt_II"/>
</dbReference>
<dbReference type="InterPro" id="IPR050935">
    <property type="entry name" value="Bromo_chromatin_reader"/>
</dbReference>
<dbReference type="InterPro" id="IPR001487">
    <property type="entry name" value="Bromodomain"/>
</dbReference>
<dbReference type="InterPro" id="IPR036427">
    <property type="entry name" value="Bromodomain-like_sf"/>
</dbReference>
<dbReference type="InterPro" id="IPR018359">
    <property type="entry name" value="Bromodomain_CS"/>
</dbReference>
<dbReference type="InterPro" id="IPR027353">
    <property type="entry name" value="NET_dom"/>
</dbReference>
<dbReference type="InterPro" id="IPR038336">
    <property type="entry name" value="NET_sf"/>
</dbReference>
<dbReference type="PANTHER" id="PTHR22880:SF225">
    <property type="entry name" value="BROMODOMAIN-CONTAINING PROTEIN BET-1-RELATED"/>
    <property type="match status" value="1"/>
</dbReference>
<dbReference type="PANTHER" id="PTHR22880">
    <property type="entry name" value="FALZ-RELATED BROMODOMAIN-CONTAINING PROTEINS"/>
    <property type="match status" value="1"/>
</dbReference>
<dbReference type="Pfam" id="PF17035">
    <property type="entry name" value="BET"/>
    <property type="match status" value="1"/>
</dbReference>
<dbReference type="Pfam" id="PF17105">
    <property type="entry name" value="BRD4_CDT"/>
    <property type="match status" value="1"/>
</dbReference>
<dbReference type="Pfam" id="PF00439">
    <property type="entry name" value="Bromodomain"/>
    <property type="match status" value="2"/>
</dbReference>
<dbReference type="PRINTS" id="PR00503">
    <property type="entry name" value="BROMODOMAIN"/>
</dbReference>
<dbReference type="SMART" id="SM00297">
    <property type="entry name" value="BROMO"/>
    <property type="match status" value="2"/>
</dbReference>
<dbReference type="SUPFAM" id="SSF47370">
    <property type="entry name" value="Bromodomain"/>
    <property type="match status" value="2"/>
</dbReference>
<dbReference type="PROSITE" id="PS00633">
    <property type="entry name" value="BROMODOMAIN_1"/>
    <property type="match status" value="2"/>
</dbReference>
<dbReference type="PROSITE" id="PS50014">
    <property type="entry name" value="BROMODOMAIN_2"/>
    <property type="match status" value="2"/>
</dbReference>
<dbReference type="PROSITE" id="PS51525">
    <property type="entry name" value="NET"/>
    <property type="match status" value="1"/>
</dbReference>
<protein>
    <recommendedName>
        <fullName>Homeotic protein female sterile</fullName>
    </recommendedName>
    <alternativeName>
        <fullName>Fragile-chorion membrane protein</fullName>
    </alternativeName>
</protein>